<dbReference type="PIR" id="S29635">
    <property type="entry name" value="S29635"/>
</dbReference>
<dbReference type="GO" id="GO:0030246">
    <property type="term" value="F:carbohydrate binding"/>
    <property type="evidence" value="ECO:0000250"/>
    <property type="project" value="UniProtKB"/>
</dbReference>
<dbReference type="GO" id="GO:0019862">
    <property type="term" value="F:IgA binding"/>
    <property type="evidence" value="ECO:0000250"/>
    <property type="project" value="UniProtKB"/>
</dbReference>
<keyword id="KW-0903">Direct protein sequencing</keyword>
<keyword id="KW-0388">IgA-binding protein</keyword>
<keyword id="KW-0430">Lectin</keyword>
<evidence type="ECO:0000250" key="1">
    <source>
        <dbReference type="UniProtKB" id="P18671"/>
    </source>
</evidence>
<evidence type="ECO:0000255" key="2"/>
<evidence type="ECO:0000256" key="3">
    <source>
        <dbReference type="SAM" id="MobiDB-lite"/>
    </source>
</evidence>
<evidence type="ECO:0000303" key="4">
    <source>
    </source>
</evidence>
<evidence type="ECO:0000305" key="5"/>
<sequence length="20" mass="2131">KQRSGESQNIIVGSWGAKVS</sequence>
<organism>
    <name type="scientific">Artocarpus tonkinensis</name>
    <dbReference type="NCBI Taxonomy" id="3492"/>
    <lineage>
        <taxon>Eukaryota</taxon>
        <taxon>Viridiplantae</taxon>
        <taxon>Streptophyta</taxon>
        <taxon>Embryophyta</taxon>
        <taxon>Tracheophyta</taxon>
        <taxon>Spermatophyta</taxon>
        <taxon>Magnoliopsida</taxon>
        <taxon>eudicotyledons</taxon>
        <taxon>Gunneridae</taxon>
        <taxon>Pentapetalae</taxon>
        <taxon>rosids</taxon>
        <taxon>fabids</taxon>
        <taxon>Rosales</taxon>
        <taxon>Moraceae</taxon>
        <taxon>Artocarpeae</taxon>
        <taxon>Artocarpus</taxon>
    </lineage>
</organism>
<name>LECB1_ARTTO</name>
<comment type="function">
    <text evidence="1">D-galactose-specific lectin, binds the T-antigen structure Gal-beta1,3-GalNAc (Thomsen-Friedenreich-antigen-specific lectin). Potent and selective stimulant of distinct T- and B-cell functions. Shows a unique ability to specifically recognize IgA-1 from human serum (By similarity).</text>
</comment>
<comment type="subunit">
    <text evidence="1">Tetramer of four alpha chains associated with two or four beta chains.</text>
</comment>
<comment type="similarity">
    <text evidence="2">Belongs to the jacalin lectin family.</text>
</comment>
<proteinExistence type="evidence at protein level"/>
<protein>
    <recommendedName>
        <fullName>Agglutinin beta-1 chain</fullName>
    </recommendedName>
    <alternativeName>
        <fullName>Agglutinin beta-I chain</fullName>
    </alternativeName>
    <alternativeName>
        <fullName>Jacalin beta-I chain</fullName>
    </alternativeName>
</protein>
<reference evidence="5" key="1">
    <citation type="journal article" date="1993" name="Biochim. Biophys. Acta">
        <title>The alpha- and beta-subunits of the jacalins are cleavage products from a 17-kDa precursor.</title>
        <authorList>
            <person name="Ngoc L.D."/>
            <person name="Brillard M."/>
            <person name="Hoebeke J."/>
        </authorList>
    </citation>
    <scope>PROTEIN SEQUENCE</scope>
</reference>
<feature type="chain" id="PRO_0000072801" description="Agglutinin beta-1 chain">
    <location>
        <begin position="1"/>
        <end position="20" status="greater than"/>
    </location>
</feature>
<feature type="region of interest" description="Disordered" evidence="3">
    <location>
        <begin position="1"/>
        <end position="20"/>
    </location>
</feature>
<feature type="compositionally biased region" description="Polar residues" evidence="3">
    <location>
        <begin position="1"/>
        <end position="11"/>
    </location>
</feature>
<feature type="non-terminal residue" evidence="4">
    <location>
        <position position="20"/>
    </location>
</feature>
<accession>Q9S8T1</accession>